<dbReference type="EMBL" id="BX248583">
    <property type="protein sequence ID" value="CAD83517.1"/>
    <property type="molecule type" value="Genomic_DNA"/>
</dbReference>
<dbReference type="SMR" id="Q7VQX5"/>
<dbReference type="STRING" id="203907.Bfl455"/>
<dbReference type="KEGG" id="bfl:Bfl455"/>
<dbReference type="eggNOG" id="COG2814">
    <property type="taxonomic scope" value="Bacteria"/>
</dbReference>
<dbReference type="HOGENOM" id="CLU_001265_60_2_6"/>
<dbReference type="OrthoDB" id="56516at2"/>
<dbReference type="Proteomes" id="UP000002192">
    <property type="component" value="Chromosome"/>
</dbReference>
<dbReference type="GO" id="GO:0005886">
    <property type="term" value="C:plasma membrane"/>
    <property type="evidence" value="ECO:0007669"/>
    <property type="project" value="UniProtKB-SubCell"/>
</dbReference>
<dbReference type="GO" id="GO:0022857">
    <property type="term" value="F:transmembrane transporter activity"/>
    <property type="evidence" value="ECO:0007669"/>
    <property type="project" value="UniProtKB-UniRule"/>
</dbReference>
<dbReference type="CDD" id="cd17329">
    <property type="entry name" value="MFS_MdtH_MDR_like"/>
    <property type="match status" value="1"/>
</dbReference>
<dbReference type="Gene3D" id="1.20.1250.20">
    <property type="entry name" value="MFS general substrate transporter like domains"/>
    <property type="match status" value="1"/>
</dbReference>
<dbReference type="HAMAP" id="MF_01529">
    <property type="entry name" value="MFS_MdtH"/>
    <property type="match status" value="1"/>
</dbReference>
<dbReference type="InterPro" id="IPR011701">
    <property type="entry name" value="MFS"/>
</dbReference>
<dbReference type="InterPro" id="IPR020846">
    <property type="entry name" value="MFS_dom"/>
</dbReference>
<dbReference type="InterPro" id="IPR036259">
    <property type="entry name" value="MFS_trans_sf"/>
</dbReference>
<dbReference type="InterPro" id="IPR050171">
    <property type="entry name" value="MFS_Transporters"/>
</dbReference>
<dbReference type="InterPro" id="IPR022855">
    <property type="entry name" value="Multidrug-R_MdtH"/>
</dbReference>
<dbReference type="NCBIfam" id="NF008650">
    <property type="entry name" value="PRK11646.1"/>
    <property type="match status" value="1"/>
</dbReference>
<dbReference type="PANTHER" id="PTHR23517:SF2">
    <property type="entry name" value="MULTIDRUG RESISTANCE PROTEIN MDTH"/>
    <property type="match status" value="1"/>
</dbReference>
<dbReference type="PANTHER" id="PTHR23517">
    <property type="entry name" value="RESISTANCE PROTEIN MDTM, PUTATIVE-RELATED-RELATED"/>
    <property type="match status" value="1"/>
</dbReference>
<dbReference type="Pfam" id="PF07690">
    <property type="entry name" value="MFS_1"/>
    <property type="match status" value="1"/>
</dbReference>
<dbReference type="SUPFAM" id="SSF103473">
    <property type="entry name" value="MFS general substrate transporter"/>
    <property type="match status" value="1"/>
</dbReference>
<dbReference type="PROSITE" id="PS50850">
    <property type="entry name" value="MFS"/>
    <property type="match status" value="1"/>
</dbReference>
<protein>
    <recommendedName>
        <fullName evidence="1">Multidrug resistance protein MdtH</fullName>
    </recommendedName>
</protein>
<comment type="subcellular location">
    <subcellularLocation>
        <location evidence="1">Cell inner membrane</location>
        <topology evidence="1">Multi-pass membrane protein</topology>
    </subcellularLocation>
</comment>
<comment type="similarity">
    <text evidence="1">Belongs to the major facilitator superfamily. DHA1 family. MdtH (TC 2.A.1.2.21) subfamily.</text>
</comment>
<evidence type="ECO:0000255" key="1">
    <source>
        <dbReference type="HAMAP-Rule" id="MF_01529"/>
    </source>
</evidence>
<organism>
    <name type="scientific">Blochmanniella floridana</name>
    <dbReference type="NCBI Taxonomy" id="203907"/>
    <lineage>
        <taxon>Bacteria</taxon>
        <taxon>Pseudomonadati</taxon>
        <taxon>Pseudomonadota</taxon>
        <taxon>Gammaproteobacteria</taxon>
        <taxon>Enterobacterales</taxon>
        <taxon>Enterobacteriaceae</taxon>
        <taxon>ant endosymbionts</taxon>
        <taxon>Candidatus Blochmanniella</taxon>
    </lineage>
</organism>
<reference key="1">
    <citation type="journal article" date="2003" name="Proc. Natl. Acad. Sci. U.S.A.">
        <title>The genome sequence of Blochmannia floridanus: comparative analysis of reduced genomes.</title>
        <authorList>
            <person name="Gil R."/>
            <person name="Silva F.J."/>
            <person name="Zientz E."/>
            <person name="Delmotte F."/>
            <person name="Gonzalez-Candelas F."/>
            <person name="Latorre A."/>
            <person name="Rausell C."/>
            <person name="Kamerbeek J."/>
            <person name="Gadau J."/>
            <person name="Hoelldobler B."/>
            <person name="van Ham R.C.H.J."/>
            <person name="Gross R."/>
            <person name="Moya A."/>
        </authorList>
    </citation>
    <scope>NUCLEOTIDE SEQUENCE [LARGE SCALE GENOMIC DNA]</scope>
</reference>
<feature type="chain" id="PRO_0000173341" description="Multidrug resistance protein MdtH">
    <location>
        <begin position="1"/>
        <end position="401"/>
    </location>
</feature>
<feature type="transmembrane region" description="Helical" evidence="1">
    <location>
        <begin position="13"/>
        <end position="33"/>
    </location>
</feature>
<feature type="transmembrane region" description="Helical" evidence="1">
    <location>
        <begin position="34"/>
        <end position="54"/>
    </location>
</feature>
<feature type="transmembrane region" description="Helical" evidence="1">
    <location>
        <begin position="88"/>
        <end position="108"/>
    </location>
</feature>
<feature type="transmembrane region" description="Helical" evidence="1">
    <location>
        <begin position="139"/>
        <end position="159"/>
    </location>
</feature>
<feature type="transmembrane region" description="Helical" evidence="1">
    <location>
        <begin position="164"/>
        <end position="184"/>
    </location>
</feature>
<feature type="transmembrane region" description="Helical" evidence="1">
    <location>
        <begin position="211"/>
        <end position="231"/>
    </location>
</feature>
<feature type="transmembrane region" description="Helical" evidence="1">
    <location>
        <begin position="248"/>
        <end position="268"/>
    </location>
</feature>
<feature type="transmembrane region" description="Helical" evidence="1">
    <location>
        <begin position="275"/>
        <end position="295"/>
    </location>
</feature>
<feature type="transmembrane region" description="Helical" evidence="1">
    <location>
        <begin position="298"/>
        <end position="318"/>
    </location>
</feature>
<feature type="transmembrane region" description="Helical" evidence="1">
    <location>
        <begin position="341"/>
        <end position="361"/>
    </location>
</feature>
<feature type="transmembrane region" description="Helical" evidence="1">
    <location>
        <begin position="366"/>
        <end position="386"/>
    </location>
</feature>
<sequence>MNSISKVRKLGKYFLIIDNMFVVIGFYAVFPLISIHFVEQLGWTAFLVGFALGLRQFIQQGLGIIGGAFADKLGAKPMIVSGLFMRTIGFIIMSLAHTPTLLCAACILSALGGTLFDPPRTALVIKLIRPWKLGRFYSILMLEDSICAIIGITLGSWLLQQYNFQLVCLTGAILFFIAGMFNAWRLPAYKISSSHLSLLDGIKQVLHNQKFIIYTLTLSGYYILSAQVMLMLPIRMHEISGQLSYIKYIYITEAILSLLLIIPITYWMEKYFKLETRLMLGLVIMIISLSPIGSVNNLYELLILISLFYIGSIVAEPARETLSALLTNYKARSSYIGFNKLSLALGGTLGYSGGGWLYDLGKELNFYQLPWIALSIIGTITVLILYYQFRYCSIQPSLYTD</sequence>
<gene>
    <name evidence="1" type="primary">mdtH</name>
    <name type="ordered locus">Bfl455</name>
</gene>
<name>MDTH_BLOFL</name>
<keyword id="KW-0997">Cell inner membrane</keyword>
<keyword id="KW-1003">Cell membrane</keyword>
<keyword id="KW-0472">Membrane</keyword>
<keyword id="KW-1185">Reference proteome</keyword>
<keyword id="KW-0812">Transmembrane</keyword>
<keyword id="KW-1133">Transmembrane helix</keyword>
<keyword id="KW-0813">Transport</keyword>
<proteinExistence type="inferred from homology"/>
<accession>Q7VQX5</accession>